<feature type="chain" id="PRO_0000217757" description="Arachidonate 5-lipoxygenase-activating protein">
    <location>
        <begin position="1"/>
        <end position="153" status="greater than"/>
    </location>
</feature>
<feature type="topological domain" description="Lumenal" evidence="1">
    <location>
        <begin position="1"/>
        <end position="8"/>
    </location>
</feature>
<feature type="transmembrane region" description="Helical" evidence="1">
    <location>
        <begin position="9"/>
        <end position="30"/>
    </location>
</feature>
<feature type="topological domain" description="Cytoplasmic" evidence="1">
    <location>
        <begin position="31"/>
        <end position="52"/>
    </location>
</feature>
<feature type="transmembrane region" description="Helical" evidence="1">
    <location>
        <begin position="53"/>
        <end position="77"/>
    </location>
</feature>
<feature type="topological domain" description="Lumenal" evidence="1">
    <location>
        <begin position="78"/>
        <end position="80"/>
    </location>
</feature>
<feature type="transmembrane region" description="Helical" evidence="1">
    <location>
        <begin position="81"/>
        <end position="102"/>
    </location>
</feature>
<feature type="topological domain" description="Cytoplasmic" evidence="1">
    <location>
        <begin position="103"/>
        <end position="107"/>
    </location>
</feature>
<feature type="intramembrane region" evidence="1">
    <location>
        <begin position="108"/>
        <end position="115"/>
    </location>
</feature>
<feature type="transmembrane region" description="Helical" evidence="1">
    <location>
        <begin position="116"/>
        <end position="128"/>
    </location>
</feature>
<feature type="topological domain" description="Lumenal" evidence="1">
    <location>
        <begin position="129"/>
        <end position="153"/>
    </location>
</feature>
<feature type="non-terminal residue">
    <location>
        <position position="153"/>
    </location>
</feature>
<organism>
    <name type="scientific">Ovis aries</name>
    <name type="common">Sheep</name>
    <dbReference type="NCBI Taxonomy" id="9940"/>
    <lineage>
        <taxon>Eukaryota</taxon>
        <taxon>Metazoa</taxon>
        <taxon>Chordata</taxon>
        <taxon>Craniata</taxon>
        <taxon>Vertebrata</taxon>
        <taxon>Euteleostomi</taxon>
        <taxon>Mammalia</taxon>
        <taxon>Eutheria</taxon>
        <taxon>Laurasiatheria</taxon>
        <taxon>Artiodactyla</taxon>
        <taxon>Ruminantia</taxon>
        <taxon>Pecora</taxon>
        <taxon>Bovidae</taxon>
        <taxon>Caprinae</taxon>
        <taxon>Ovis</taxon>
    </lineage>
</organism>
<protein>
    <recommendedName>
        <fullName>Arachidonate 5-lipoxygenase-activating protein</fullName>
    </recommendedName>
    <alternativeName>
        <fullName>FLAP</fullName>
    </alternativeName>
    <alternativeName>
        <fullName>MK-886-binding protein</fullName>
    </alternativeName>
</protein>
<name>AL5AP_SHEEP</name>
<dbReference type="EMBL" id="M96557">
    <property type="protein sequence ID" value="AAA31521.1"/>
    <property type="molecule type" value="mRNA"/>
</dbReference>
<dbReference type="SMR" id="P30358"/>
<dbReference type="STRING" id="9940.ENSOARP00000012708"/>
<dbReference type="PaxDb" id="9940-ENSOARP00000012708"/>
<dbReference type="eggNOG" id="ENOG502RZJB">
    <property type="taxonomic scope" value="Eukaryota"/>
</dbReference>
<dbReference type="Proteomes" id="UP000002356">
    <property type="component" value="Unplaced"/>
</dbReference>
<dbReference type="GO" id="GO:0005789">
    <property type="term" value="C:endoplasmic reticulum membrane"/>
    <property type="evidence" value="ECO:0007669"/>
    <property type="project" value="UniProtKB-SubCell"/>
</dbReference>
<dbReference type="GO" id="GO:0005635">
    <property type="term" value="C:nuclear envelope"/>
    <property type="evidence" value="ECO:0000250"/>
    <property type="project" value="UniProtKB"/>
</dbReference>
<dbReference type="GO" id="GO:0031965">
    <property type="term" value="C:nuclear membrane"/>
    <property type="evidence" value="ECO:0000250"/>
    <property type="project" value="UniProtKB"/>
</dbReference>
<dbReference type="GO" id="GO:0050544">
    <property type="term" value="F:arachidonate binding"/>
    <property type="evidence" value="ECO:0000250"/>
    <property type="project" value="UniProtKB"/>
</dbReference>
<dbReference type="GO" id="GO:0008047">
    <property type="term" value="F:enzyme activator activity"/>
    <property type="evidence" value="ECO:0007669"/>
    <property type="project" value="InterPro"/>
</dbReference>
<dbReference type="GO" id="GO:0004602">
    <property type="term" value="F:glutathione peroxidase activity"/>
    <property type="evidence" value="ECO:0007669"/>
    <property type="project" value="TreeGrafter"/>
</dbReference>
<dbReference type="GO" id="GO:0004364">
    <property type="term" value="F:glutathione transferase activity"/>
    <property type="evidence" value="ECO:0007669"/>
    <property type="project" value="TreeGrafter"/>
</dbReference>
<dbReference type="GO" id="GO:0004464">
    <property type="term" value="F:leukotriene-C4 synthase activity"/>
    <property type="evidence" value="ECO:0007669"/>
    <property type="project" value="TreeGrafter"/>
</dbReference>
<dbReference type="GO" id="GO:0019370">
    <property type="term" value="P:leukotriene biosynthetic process"/>
    <property type="evidence" value="ECO:0007669"/>
    <property type="project" value="UniProtKB-KW"/>
</dbReference>
<dbReference type="FunFam" id="1.20.120.550:FF:000003">
    <property type="entry name" value="Leukotriene C4 synthase"/>
    <property type="match status" value="1"/>
</dbReference>
<dbReference type="Gene3D" id="1.20.120.550">
    <property type="entry name" value="Membrane associated eicosanoid/glutathione metabolism-like domain"/>
    <property type="match status" value="1"/>
</dbReference>
<dbReference type="InterPro" id="IPR001446">
    <property type="entry name" value="5_LipOase_AP"/>
</dbReference>
<dbReference type="InterPro" id="IPR018295">
    <property type="entry name" value="FLAP/GST2/LTC4S_CS"/>
</dbReference>
<dbReference type="InterPro" id="IPR050997">
    <property type="entry name" value="MAPEG"/>
</dbReference>
<dbReference type="InterPro" id="IPR023352">
    <property type="entry name" value="MAPEG-like_dom_sf"/>
</dbReference>
<dbReference type="InterPro" id="IPR001129">
    <property type="entry name" value="Membr-assoc_MAPEG"/>
</dbReference>
<dbReference type="PANTHER" id="PTHR10250:SF2">
    <property type="entry name" value="ARACHIDONATE 5-LIPOXYGENASE-ACTIVATING PROTEIN"/>
    <property type="match status" value="1"/>
</dbReference>
<dbReference type="PANTHER" id="PTHR10250">
    <property type="entry name" value="MICROSOMAL GLUTATHIONE S-TRANSFERASE"/>
    <property type="match status" value="1"/>
</dbReference>
<dbReference type="Pfam" id="PF01124">
    <property type="entry name" value="MAPEG"/>
    <property type="match status" value="1"/>
</dbReference>
<dbReference type="PRINTS" id="PR00488">
    <property type="entry name" value="5LPOXGNASEAP"/>
</dbReference>
<dbReference type="SUPFAM" id="SSF161084">
    <property type="entry name" value="MAPEG domain-like"/>
    <property type="match status" value="1"/>
</dbReference>
<dbReference type="PROSITE" id="PS01297">
    <property type="entry name" value="FLAP_GST2_LTC4S"/>
    <property type="match status" value="1"/>
</dbReference>
<keyword id="KW-0256">Endoplasmic reticulum</keyword>
<keyword id="KW-0434">Leukotriene biosynthesis</keyword>
<keyword id="KW-0472">Membrane</keyword>
<keyword id="KW-0539">Nucleus</keyword>
<keyword id="KW-1185">Reference proteome</keyword>
<keyword id="KW-0812">Transmembrane</keyword>
<keyword id="KW-1133">Transmembrane helix</keyword>
<comment type="function">
    <text evidence="1">Required for leukotriene biosynthesis by ALOX5 (5-lipoxygenase). Anchors ALOX5 to the membrane. Binds arachidonic acid, and could play an essential role in the transfer of arachidonic acid to ALOX5. Binds to MK-886, a compound that blocks the biosynthesis of leukotrienes (By similarity).</text>
</comment>
<comment type="subunit">
    <text evidence="1">Homotrimer. Interacts with LTC4S and ALOX5 (By similarity).</text>
</comment>
<comment type="subcellular location">
    <subcellularLocation>
        <location evidence="1">Nucleus membrane</location>
        <topology evidence="1">Multi-pass membrane protein</topology>
    </subcellularLocation>
    <subcellularLocation>
        <location evidence="1">Endoplasmic reticulum membrane</location>
        <topology evidence="1">Multi-pass membrane protein</topology>
    </subcellularLocation>
</comment>
<comment type="domain">
    <text evidence="1">The C-terminal part after residue 140 is mostly disordered.</text>
</comment>
<comment type="similarity">
    <text evidence="2">Belongs to the MAPEG family.</text>
</comment>
<reference key="1">
    <citation type="journal article" date="1992" name="Mol. Pharmacol.">
        <title>Cross-species comparison of 5-lipoxygenase-activating protein.</title>
        <authorList>
            <person name="Vickers P.J."/>
            <person name="O'Neill G.P."/>
            <person name="Mancini J.A."/>
            <person name="Charleson S."/>
            <person name="Abramovitz M."/>
        </authorList>
    </citation>
    <scope>NUCLEOTIDE SEQUENCE [MRNA]</scope>
</reference>
<gene>
    <name type="primary">ALOX5AP</name>
    <name type="synonym">FLAP</name>
</gene>
<accession>P30358</accession>
<evidence type="ECO:0000250" key="1"/>
<evidence type="ECO:0000305" key="2"/>
<sequence length="153" mass="17207">MDQETVGNIVLLAIVTLISVVQNGFFAHKVEHESKTHNGRSFQRTGPLAFERVYTANQNCVDAYPTFLVMLWSAGLLCSQVPAAFAGLMYLFVRQKYFVGYLGERTQSTPGYIFGKRIILFLFAMSLAGILNYFLIAFFGSDFENYIKTVTTT</sequence>
<proteinExistence type="evidence at transcript level"/>